<accession>A4YQF7</accession>
<feature type="chain" id="PRO_0000321973" description="C4-dicarboxylate transport protein 1">
    <location>
        <begin position="1"/>
        <end position="439"/>
    </location>
</feature>
<feature type="transmembrane region" description="Helical" evidence="1">
    <location>
        <begin position="18"/>
        <end position="38"/>
    </location>
</feature>
<feature type="transmembrane region" description="Helical" evidence="1">
    <location>
        <begin position="56"/>
        <end position="76"/>
    </location>
</feature>
<feature type="transmembrane region" description="Helical" evidence="1">
    <location>
        <begin position="91"/>
        <end position="111"/>
    </location>
</feature>
<feature type="transmembrane region" description="Helical" evidence="1">
    <location>
        <begin position="157"/>
        <end position="177"/>
    </location>
</feature>
<feature type="transmembrane region" description="Helical" evidence="1">
    <location>
        <begin position="193"/>
        <end position="213"/>
    </location>
</feature>
<feature type="transmembrane region" description="Helical" evidence="1">
    <location>
        <begin position="231"/>
        <end position="251"/>
    </location>
</feature>
<reference key="1">
    <citation type="journal article" date="2007" name="Science">
        <title>Legumes symbioses: absence of nod genes in photosynthetic bradyrhizobia.</title>
        <authorList>
            <person name="Giraud E."/>
            <person name="Moulin L."/>
            <person name="Vallenet D."/>
            <person name="Barbe V."/>
            <person name="Cytryn E."/>
            <person name="Avarre J.-C."/>
            <person name="Jaubert M."/>
            <person name="Simon D."/>
            <person name="Cartieaux F."/>
            <person name="Prin Y."/>
            <person name="Bena G."/>
            <person name="Hannibal L."/>
            <person name="Fardoux J."/>
            <person name="Kojadinovic M."/>
            <person name="Vuillet L."/>
            <person name="Lajus A."/>
            <person name="Cruveiller S."/>
            <person name="Rouy Z."/>
            <person name="Mangenot S."/>
            <person name="Segurens B."/>
            <person name="Dossat C."/>
            <person name="Franck W.L."/>
            <person name="Chang W.-S."/>
            <person name="Saunders E."/>
            <person name="Bruce D."/>
            <person name="Richardson P."/>
            <person name="Normand P."/>
            <person name="Dreyfus B."/>
            <person name="Pignol D."/>
            <person name="Stacey G."/>
            <person name="Emerich D."/>
            <person name="Vermeglio A."/>
            <person name="Medigue C."/>
            <person name="Sadowsky M."/>
        </authorList>
    </citation>
    <scope>NUCLEOTIDE SEQUENCE [LARGE SCALE GENOMIC DNA]</scope>
    <source>
        <strain>ORS 278</strain>
    </source>
</reference>
<sequence length="439" mass="46397">MSATTPAAAAPKKPFYRVLYIQVLVAIVLGVIVGWLWPEIGKNDWIKALGDGFVKLIKMVIAPVIFCTVVSGIAHVSEVKKVGRVAIKALIYFEIVSTFALALGLIVANVIQPGAGFQGQTNAAAVANYAKQASEMKSVDFVLHIIPDTVVGAFAQGEILQVLLFSILFGIALMSLGERGHTMRAFVDDAAHAIFGVIAIVVKAAPIGAFGAMAFTIGRYGPQALGNLAGLIATFYLTALAFVIIVLGIIARIAGFSIFKFLTYIKDELLIVLGTSSSESALPQMMEKLERLGCSKPVVGLVVPTGYSFNLDGTNIYMTLATLFIAQAMNVHLSFGEQITILLVAMLTSKGASGITGAGFITLAGTLAAVRPELVPGMAIVLGIDKFMSECRALTNLCGNGVACVIVAWWEGELDRDKLRAALDRDIDPSDVEVAVTTG</sequence>
<name>DCTA1_BRASO</name>
<organism>
    <name type="scientific">Bradyrhizobium sp. (strain ORS 278)</name>
    <dbReference type="NCBI Taxonomy" id="114615"/>
    <lineage>
        <taxon>Bacteria</taxon>
        <taxon>Pseudomonadati</taxon>
        <taxon>Pseudomonadota</taxon>
        <taxon>Alphaproteobacteria</taxon>
        <taxon>Hyphomicrobiales</taxon>
        <taxon>Nitrobacteraceae</taxon>
        <taxon>Bradyrhizobium</taxon>
    </lineage>
</organism>
<dbReference type="EMBL" id="CU234118">
    <property type="protein sequence ID" value="CAL76133.1"/>
    <property type="molecule type" value="Genomic_DNA"/>
</dbReference>
<dbReference type="RefSeq" id="WP_011925352.1">
    <property type="nucleotide sequence ID" value="NC_009445.1"/>
</dbReference>
<dbReference type="SMR" id="A4YQF7"/>
<dbReference type="STRING" id="114615.BRADO2301"/>
<dbReference type="KEGG" id="bra:BRADO2301"/>
<dbReference type="eggNOG" id="COG1301">
    <property type="taxonomic scope" value="Bacteria"/>
</dbReference>
<dbReference type="HOGENOM" id="CLU_019375_7_0_5"/>
<dbReference type="OrthoDB" id="9766690at2"/>
<dbReference type="Proteomes" id="UP000001994">
    <property type="component" value="Chromosome"/>
</dbReference>
<dbReference type="GO" id="GO:0005886">
    <property type="term" value="C:plasma membrane"/>
    <property type="evidence" value="ECO:0007669"/>
    <property type="project" value="UniProtKB-SubCell"/>
</dbReference>
<dbReference type="GO" id="GO:0015138">
    <property type="term" value="F:fumarate transmembrane transporter activity"/>
    <property type="evidence" value="ECO:0007669"/>
    <property type="project" value="TreeGrafter"/>
</dbReference>
<dbReference type="GO" id="GO:0015366">
    <property type="term" value="F:malate:proton symporter activity"/>
    <property type="evidence" value="ECO:0007669"/>
    <property type="project" value="TreeGrafter"/>
</dbReference>
<dbReference type="GO" id="GO:0015141">
    <property type="term" value="F:succinate transmembrane transporter activity"/>
    <property type="evidence" value="ECO:0007669"/>
    <property type="project" value="TreeGrafter"/>
</dbReference>
<dbReference type="GO" id="GO:0070778">
    <property type="term" value="P:L-aspartate transmembrane transport"/>
    <property type="evidence" value="ECO:0007669"/>
    <property type="project" value="TreeGrafter"/>
</dbReference>
<dbReference type="FunFam" id="1.10.3860.10:FF:000001">
    <property type="entry name" value="C4-dicarboxylate transport protein"/>
    <property type="match status" value="1"/>
</dbReference>
<dbReference type="Gene3D" id="1.10.3860.10">
    <property type="entry name" value="Sodium:dicarboxylate symporter"/>
    <property type="match status" value="1"/>
</dbReference>
<dbReference type="HAMAP" id="MF_01300">
    <property type="entry name" value="C4_dicarb_transport"/>
    <property type="match status" value="1"/>
</dbReference>
<dbReference type="InterPro" id="IPR023954">
    <property type="entry name" value="C4_dicarb_transport"/>
</dbReference>
<dbReference type="InterPro" id="IPR001991">
    <property type="entry name" value="Na-dicarboxylate_symporter"/>
</dbReference>
<dbReference type="InterPro" id="IPR018107">
    <property type="entry name" value="Na-dicarboxylate_symporter_CS"/>
</dbReference>
<dbReference type="InterPro" id="IPR036458">
    <property type="entry name" value="Na:dicarbo_symporter_sf"/>
</dbReference>
<dbReference type="NCBIfam" id="NF002461">
    <property type="entry name" value="PRK01663.1"/>
    <property type="match status" value="1"/>
</dbReference>
<dbReference type="PANTHER" id="PTHR42865:SF1">
    <property type="entry name" value="AEROBIC C4-DICARBOXYLATE TRANSPORT PROTEIN"/>
    <property type="match status" value="1"/>
</dbReference>
<dbReference type="PANTHER" id="PTHR42865">
    <property type="entry name" value="PROTON/GLUTAMATE-ASPARTATE SYMPORTER"/>
    <property type="match status" value="1"/>
</dbReference>
<dbReference type="Pfam" id="PF00375">
    <property type="entry name" value="SDF"/>
    <property type="match status" value="1"/>
</dbReference>
<dbReference type="PRINTS" id="PR00173">
    <property type="entry name" value="EDTRNSPORT"/>
</dbReference>
<dbReference type="SUPFAM" id="SSF118215">
    <property type="entry name" value="Proton glutamate symport protein"/>
    <property type="match status" value="1"/>
</dbReference>
<dbReference type="PROSITE" id="PS00714">
    <property type="entry name" value="NA_DICARBOXYL_SYMP_2"/>
    <property type="match status" value="1"/>
</dbReference>
<proteinExistence type="inferred from homology"/>
<keyword id="KW-0997">Cell inner membrane</keyword>
<keyword id="KW-1003">Cell membrane</keyword>
<keyword id="KW-0472">Membrane</keyword>
<keyword id="KW-1185">Reference proteome</keyword>
<keyword id="KW-0769">Symport</keyword>
<keyword id="KW-0812">Transmembrane</keyword>
<keyword id="KW-1133">Transmembrane helix</keyword>
<keyword id="KW-0813">Transport</keyword>
<evidence type="ECO:0000255" key="1">
    <source>
        <dbReference type="HAMAP-Rule" id="MF_01300"/>
    </source>
</evidence>
<protein>
    <recommendedName>
        <fullName evidence="1">C4-dicarboxylate transport protein 1</fullName>
    </recommendedName>
</protein>
<comment type="function">
    <text evidence="1">Responsible for the transport of dicarboxylates such as succinate, fumarate, and malate from the periplasm across the membrane.</text>
</comment>
<comment type="subcellular location">
    <subcellularLocation>
        <location evidence="1">Cell inner membrane</location>
        <topology evidence="1">Multi-pass membrane protein</topology>
    </subcellularLocation>
</comment>
<comment type="similarity">
    <text evidence="1">Belongs to the dicarboxylate/amino acid:cation symporter (DAACS) (TC 2.A.23) family.</text>
</comment>
<gene>
    <name evidence="1" type="primary">dctA1</name>
    <name type="ordered locus">BRADO2301</name>
</gene>